<protein>
    <recommendedName>
        <fullName>Hydrocephalus-inducing protein homolog</fullName>
    </recommendedName>
</protein>
<keyword id="KW-0002">3D-structure</keyword>
<keyword id="KW-0025">Alternative splicing</keyword>
<keyword id="KW-0966">Cell projection</keyword>
<keyword id="KW-1186">Ciliopathy</keyword>
<keyword id="KW-0969">Cilium</keyword>
<keyword id="KW-0175">Coiled coil</keyword>
<keyword id="KW-0963">Cytoplasm</keyword>
<keyword id="KW-0206">Cytoskeleton</keyword>
<keyword id="KW-0282">Flagellum</keyword>
<keyword id="KW-1012">Kartagener syndrome</keyword>
<keyword id="KW-0990">Primary ciliary dyskinesia</keyword>
<keyword id="KW-1267">Proteomics identification</keyword>
<keyword id="KW-1185">Reference proteome</keyword>
<organism>
    <name type="scientific">Homo sapiens</name>
    <name type="common">Human</name>
    <dbReference type="NCBI Taxonomy" id="9606"/>
    <lineage>
        <taxon>Eukaryota</taxon>
        <taxon>Metazoa</taxon>
        <taxon>Chordata</taxon>
        <taxon>Craniata</taxon>
        <taxon>Vertebrata</taxon>
        <taxon>Euteleostomi</taxon>
        <taxon>Mammalia</taxon>
        <taxon>Eutheria</taxon>
        <taxon>Euarchontoglires</taxon>
        <taxon>Primates</taxon>
        <taxon>Haplorrhini</taxon>
        <taxon>Catarrhini</taxon>
        <taxon>Hominidae</taxon>
        <taxon>Homo</taxon>
    </lineage>
</organism>
<reference key="1">
    <citation type="journal article" date="2004" name="Nat. Genet.">
        <title>Complete sequencing and characterization of 21,243 full-length human cDNAs.</title>
        <authorList>
            <person name="Ota T."/>
            <person name="Suzuki Y."/>
            <person name="Nishikawa T."/>
            <person name="Otsuki T."/>
            <person name="Sugiyama T."/>
            <person name="Irie R."/>
            <person name="Wakamatsu A."/>
            <person name="Hayashi K."/>
            <person name="Sato H."/>
            <person name="Nagai K."/>
            <person name="Kimura K."/>
            <person name="Makita H."/>
            <person name="Sekine M."/>
            <person name="Obayashi M."/>
            <person name="Nishi T."/>
            <person name="Shibahara T."/>
            <person name="Tanaka T."/>
            <person name="Ishii S."/>
            <person name="Yamamoto J."/>
            <person name="Saito K."/>
            <person name="Kawai Y."/>
            <person name="Isono Y."/>
            <person name="Nakamura Y."/>
            <person name="Nagahari K."/>
            <person name="Murakami K."/>
            <person name="Yasuda T."/>
            <person name="Iwayanagi T."/>
            <person name="Wagatsuma M."/>
            <person name="Shiratori A."/>
            <person name="Sudo H."/>
            <person name="Hosoiri T."/>
            <person name="Kaku Y."/>
            <person name="Kodaira H."/>
            <person name="Kondo H."/>
            <person name="Sugawara M."/>
            <person name="Takahashi M."/>
            <person name="Kanda K."/>
            <person name="Yokoi T."/>
            <person name="Furuya T."/>
            <person name="Kikkawa E."/>
            <person name="Omura Y."/>
            <person name="Abe K."/>
            <person name="Kamihara K."/>
            <person name="Katsuta N."/>
            <person name="Sato K."/>
            <person name="Tanikawa M."/>
            <person name="Yamazaki M."/>
            <person name="Ninomiya K."/>
            <person name="Ishibashi T."/>
            <person name="Yamashita H."/>
            <person name="Murakawa K."/>
            <person name="Fujimori K."/>
            <person name="Tanai H."/>
            <person name="Kimata M."/>
            <person name="Watanabe M."/>
            <person name="Hiraoka S."/>
            <person name="Chiba Y."/>
            <person name="Ishida S."/>
            <person name="Ono Y."/>
            <person name="Takiguchi S."/>
            <person name="Watanabe S."/>
            <person name="Yosida M."/>
            <person name="Hotuta T."/>
            <person name="Kusano J."/>
            <person name="Kanehori K."/>
            <person name="Takahashi-Fujii A."/>
            <person name="Hara H."/>
            <person name="Tanase T.-O."/>
            <person name="Nomura Y."/>
            <person name="Togiya S."/>
            <person name="Komai F."/>
            <person name="Hara R."/>
            <person name="Takeuchi K."/>
            <person name="Arita M."/>
            <person name="Imose N."/>
            <person name="Musashino K."/>
            <person name="Yuuki H."/>
            <person name="Oshima A."/>
            <person name="Sasaki N."/>
            <person name="Aotsuka S."/>
            <person name="Yoshikawa Y."/>
            <person name="Matsunawa H."/>
            <person name="Ichihara T."/>
            <person name="Shiohata N."/>
            <person name="Sano S."/>
            <person name="Moriya S."/>
            <person name="Momiyama H."/>
            <person name="Satoh N."/>
            <person name="Takami S."/>
            <person name="Terashima Y."/>
            <person name="Suzuki O."/>
            <person name="Nakagawa S."/>
            <person name="Senoh A."/>
            <person name="Mizoguchi H."/>
            <person name="Goto Y."/>
            <person name="Shimizu F."/>
            <person name="Wakebe H."/>
            <person name="Hishigaki H."/>
            <person name="Watanabe T."/>
            <person name="Sugiyama A."/>
            <person name="Takemoto M."/>
            <person name="Kawakami B."/>
            <person name="Yamazaki M."/>
            <person name="Watanabe K."/>
            <person name="Kumagai A."/>
            <person name="Itakura S."/>
            <person name="Fukuzumi Y."/>
            <person name="Fujimori Y."/>
            <person name="Komiyama M."/>
            <person name="Tashiro H."/>
            <person name="Tanigami A."/>
            <person name="Fujiwara T."/>
            <person name="Ono T."/>
            <person name="Yamada K."/>
            <person name="Fujii Y."/>
            <person name="Ozaki K."/>
            <person name="Hirao M."/>
            <person name="Ohmori Y."/>
            <person name="Kawabata A."/>
            <person name="Hikiji T."/>
            <person name="Kobatake N."/>
            <person name="Inagaki H."/>
            <person name="Ikema Y."/>
            <person name="Okamoto S."/>
            <person name="Okitani R."/>
            <person name="Kawakami T."/>
            <person name="Noguchi S."/>
            <person name="Itoh T."/>
            <person name="Shigeta K."/>
            <person name="Senba T."/>
            <person name="Matsumura K."/>
            <person name="Nakajima Y."/>
            <person name="Mizuno T."/>
            <person name="Morinaga M."/>
            <person name="Sasaki M."/>
            <person name="Togashi T."/>
            <person name="Oyama M."/>
            <person name="Hata H."/>
            <person name="Watanabe M."/>
            <person name="Komatsu T."/>
            <person name="Mizushima-Sugano J."/>
            <person name="Satoh T."/>
            <person name="Shirai Y."/>
            <person name="Takahashi Y."/>
            <person name="Nakagawa K."/>
            <person name="Okumura K."/>
            <person name="Nagase T."/>
            <person name="Nomura N."/>
            <person name="Kikuchi H."/>
            <person name="Masuho Y."/>
            <person name="Yamashita R."/>
            <person name="Nakai K."/>
            <person name="Yada T."/>
            <person name="Nakamura Y."/>
            <person name="Ohara O."/>
            <person name="Isogai T."/>
            <person name="Sugano S."/>
        </authorList>
    </citation>
    <scope>NUCLEOTIDE SEQUENCE [LARGE SCALE MRNA] (ISOFORMS 4; 6 AND 7)</scope>
    <scope>NUCLEOTIDE SEQUENCE [LARGE SCALE MRNA] OF 4575-5121 (ISOFORM 1)</scope>
    <source>
        <tissue>Lung</tissue>
        <tissue>Teratocarcinoma</tissue>
    </source>
</reference>
<reference key="2">
    <citation type="journal article" date="2004" name="Nature">
        <title>The sequence and analysis of duplication-rich human chromosome 16.</title>
        <authorList>
            <person name="Martin J."/>
            <person name="Han C."/>
            <person name="Gordon L.A."/>
            <person name="Terry A."/>
            <person name="Prabhakar S."/>
            <person name="She X."/>
            <person name="Xie G."/>
            <person name="Hellsten U."/>
            <person name="Chan Y.M."/>
            <person name="Altherr M."/>
            <person name="Couronne O."/>
            <person name="Aerts A."/>
            <person name="Bajorek E."/>
            <person name="Black S."/>
            <person name="Blumer H."/>
            <person name="Branscomb E."/>
            <person name="Brown N.C."/>
            <person name="Bruno W.J."/>
            <person name="Buckingham J.M."/>
            <person name="Callen D.F."/>
            <person name="Campbell C.S."/>
            <person name="Campbell M.L."/>
            <person name="Campbell E.W."/>
            <person name="Caoile C."/>
            <person name="Challacombe J.F."/>
            <person name="Chasteen L.A."/>
            <person name="Chertkov O."/>
            <person name="Chi H.C."/>
            <person name="Christensen M."/>
            <person name="Clark L.M."/>
            <person name="Cohn J.D."/>
            <person name="Denys M."/>
            <person name="Detter J.C."/>
            <person name="Dickson M."/>
            <person name="Dimitrijevic-Bussod M."/>
            <person name="Escobar J."/>
            <person name="Fawcett J.J."/>
            <person name="Flowers D."/>
            <person name="Fotopulos D."/>
            <person name="Glavina T."/>
            <person name="Gomez M."/>
            <person name="Gonzales E."/>
            <person name="Goodstein D."/>
            <person name="Goodwin L.A."/>
            <person name="Grady D.L."/>
            <person name="Grigoriev I."/>
            <person name="Groza M."/>
            <person name="Hammon N."/>
            <person name="Hawkins T."/>
            <person name="Haydu L."/>
            <person name="Hildebrand C.E."/>
            <person name="Huang W."/>
            <person name="Israni S."/>
            <person name="Jett J."/>
            <person name="Jewett P.B."/>
            <person name="Kadner K."/>
            <person name="Kimball H."/>
            <person name="Kobayashi A."/>
            <person name="Krawczyk M.-C."/>
            <person name="Leyba T."/>
            <person name="Longmire J.L."/>
            <person name="Lopez F."/>
            <person name="Lou Y."/>
            <person name="Lowry S."/>
            <person name="Ludeman T."/>
            <person name="Manohar C.F."/>
            <person name="Mark G.A."/>
            <person name="McMurray K.L."/>
            <person name="Meincke L.J."/>
            <person name="Morgan J."/>
            <person name="Moyzis R.K."/>
            <person name="Mundt M.O."/>
            <person name="Munk A.C."/>
            <person name="Nandkeshwar R.D."/>
            <person name="Pitluck S."/>
            <person name="Pollard M."/>
            <person name="Predki P."/>
            <person name="Parson-Quintana B."/>
            <person name="Ramirez L."/>
            <person name="Rash S."/>
            <person name="Retterer J."/>
            <person name="Ricke D.O."/>
            <person name="Robinson D.L."/>
            <person name="Rodriguez A."/>
            <person name="Salamov A."/>
            <person name="Saunders E.H."/>
            <person name="Scott D."/>
            <person name="Shough T."/>
            <person name="Stallings R.L."/>
            <person name="Stalvey M."/>
            <person name="Sutherland R.D."/>
            <person name="Tapia R."/>
            <person name="Tesmer J.G."/>
            <person name="Thayer N."/>
            <person name="Thompson L.S."/>
            <person name="Tice H."/>
            <person name="Torney D.C."/>
            <person name="Tran-Gyamfi M."/>
            <person name="Tsai M."/>
            <person name="Ulanovsky L.E."/>
            <person name="Ustaszewska A."/>
            <person name="Vo N."/>
            <person name="White P.S."/>
            <person name="Williams A.L."/>
            <person name="Wills P.L."/>
            <person name="Wu J.-R."/>
            <person name="Wu K."/>
            <person name="Yang J."/>
            <person name="DeJong P."/>
            <person name="Bruce D."/>
            <person name="Doggett N.A."/>
            <person name="Deaven L."/>
            <person name="Schmutz J."/>
            <person name="Grimwood J."/>
            <person name="Richardson P."/>
            <person name="Rokhsar D.S."/>
            <person name="Eichler E.E."/>
            <person name="Gilna P."/>
            <person name="Lucas S.M."/>
            <person name="Myers R.M."/>
            <person name="Rubin E.M."/>
            <person name="Pennacchio L.A."/>
        </authorList>
    </citation>
    <scope>NUCLEOTIDE SEQUENCE [LARGE SCALE GENOMIC DNA]</scope>
</reference>
<reference key="3">
    <citation type="journal article" date="2004" name="Genome Res.">
        <title>The status, quality, and expansion of the NIH full-length cDNA project: the Mammalian Gene Collection (MGC).</title>
        <authorList>
            <consortium name="The MGC Project Team"/>
        </authorList>
    </citation>
    <scope>NUCLEOTIDE SEQUENCE [LARGE SCALE MRNA] (ISOFORMS 2 AND 5)</scope>
    <source>
        <tissue>Testis</tissue>
    </source>
</reference>
<reference key="4">
    <citation type="journal article" date="2007" name="BMC Genomics">
        <title>The full-ORF clone resource of the German cDNA consortium.</title>
        <authorList>
            <person name="Bechtel S."/>
            <person name="Rosenfelder H."/>
            <person name="Duda A."/>
            <person name="Schmidt C.P."/>
            <person name="Ernst U."/>
            <person name="Wellenreuther R."/>
            <person name="Mehrle A."/>
            <person name="Schuster C."/>
            <person name="Bahr A."/>
            <person name="Bloecker H."/>
            <person name="Heubner D."/>
            <person name="Hoerlein A."/>
            <person name="Michel G."/>
            <person name="Wedler H."/>
            <person name="Koehrer K."/>
            <person name="Ottenwaelder B."/>
            <person name="Poustka A."/>
            <person name="Wiemann S."/>
            <person name="Schupp I."/>
        </authorList>
    </citation>
    <scope>NUCLEOTIDE SEQUENCE [LARGE SCALE MRNA] OF 715-5121 (ISOFORM 4)</scope>
    <scope>NUCLEOTIDE SEQUENCE [LARGE SCALE MRNA] OF 4141-5121 (ISOFORM 1)</scope>
    <source>
        <tissue>Amygdala</tissue>
        <tissue>Testis</tissue>
    </source>
</reference>
<reference key="5">
    <citation type="journal article" date="2006" name="Genomics">
        <title>A 360-kb interchromosomal duplication of the human HYDIN locus.</title>
        <authorList>
            <person name="Doggett N.A."/>
            <person name="Xie G."/>
            <person name="Meincke L.J."/>
            <person name="Sutherland R.D."/>
            <person name="Mundt M.O."/>
            <person name="Berbari N.S."/>
            <person name="Davy B.E."/>
            <person name="Robinson M.L."/>
            <person name="Rudd M.K."/>
            <person name="Weber J.L."/>
            <person name="Stallings R.L."/>
            <person name="Han C."/>
        </authorList>
    </citation>
    <scope>IDENTIFICATION</scope>
</reference>
<reference key="6">
    <citation type="journal article" date="2007" name="J. Cell Biol.">
        <title>Hydin seek: finding a function in ciliary motility.</title>
        <authorList>
            <person name="Smith E.F."/>
        </authorList>
    </citation>
    <scope>REVIEW</scope>
</reference>
<reference key="7">
    <citation type="journal article" date="2012" name="Am. J. Hum. Genet.">
        <title>Recessive HYDIN mutations cause primary ciliary dyskinesia without randomization of left-right body asymmetry.</title>
        <authorList>
            <person name="Olbrich H."/>
            <person name="Schmidts M."/>
            <person name="Werner C."/>
            <person name="Onoufriadis A."/>
            <person name="Loges N.T."/>
            <person name="Raidt J."/>
            <person name="Banki N.F."/>
            <person name="Shoemark A."/>
            <person name="Burgoyne T."/>
            <person name="Al Turki S."/>
            <person name="Hurles M.E."/>
            <person name="Kohler G."/>
            <person name="Schroeder J."/>
            <person name="Nurnberg G."/>
            <person name="Nurnberg P."/>
            <person name="Chung E.M."/>
            <person name="Reinhardt R."/>
            <person name="Marthin J.K."/>
            <person name="Nielsen K.G."/>
            <person name="Mitchison H.M."/>
            <person name="Omran H."/>
        </authorList>
    </citation>
    <scope>INVOLVEMENT IN CILD5</scope>
</reference>
<reference key="8">
    <citation type="journal article" date="2014" name="Eur. Respir. J.">
        <title>Ciliary beat pattern and frequency in genetic variants of primary ciliary dyskinesia.</title>
        <authorList>
            <person name="Raidt J."/>
            <person name="Wallmeier J."/>
            <person name="Hjeij R."/>
            <person name="Onnebrink J.G."/>
            <person name="Pennekamp P."/>
            <person name="Loges N.T."/>
            <person name="Olbrich H."/>
            <person name="Haeffner K."/>
            <person name="Dougherty G.W."/>
            <person name="Omran H."/>
            <person name="Werner C."/>
        </authorList>
    </citation>
    <scope>INVOLVEMENT IN CILD5</scope>
</reference>
<reference key="9">
    <citation type="journal article" date="2019" name="J. Proteome Res.">
        <title>Cell Type-Specific Expression of Testis Elevated Genes Based on Transcriptomics and Antibody-Based Proteomics.</title>
        <authorList>
            <person name="Pineau C."/>
            <person name="Hikmet F."/>
            <person name="Zhang C."/>
            <person name="Oksvold P."/>
            <person name="Chen S."/>
            <person name="Fagerberg L."/>
            <person name="Uhlen M."/>
            <person name="Lindskog C."/>
        </authorList>
    </citation>
    <scope>SUBCELLULAR LOCATION</scope>
</reference>
<reference key="10">
    <citation type="submission" date="2007-07" db="PDB data bank">
        <title>Solution structure of the C-terminal PAPD-like domain from human HYDIN protein.</title>
        <authorList>
            <consortium name="RIKEN structural genomics initiative (RSGI)"/>
        </authorList>
    </citation>
    <scope>STRUCTURE BY NMR OF 458-563</scope>
</reference>
<comment type="function">
    <text evidence="1">Required for ciliary motility.</text>
</comment>
<comment type="subunit">
    <text evidence="2">Interacts with KIF9.</text>
</comment>
<comment type="interaction">
    <interactant intactId="EBI-14748124">
        <id>Q4G0P3-6</id>
    </interactant>
    <interactant intactId="EBI-724639">
        <id>Q9UBV8</id>
        <label>PEF1</label>
    </interactant>
    <organismsDiffer>false</organismsDiffer>
    <experiments>3</experiments>
</comment>
<comment type="subcellular location">
    <subcellularLocation>
        <location evidence="7">Cell projection</location>
        <location evidence="7">Cilium</location>
    </subcellularLocation>
    <subcellularLocation>
        <location evidence="2">Cytoplasm</location>
        <location evidence="2">Cytoskeleton</location>
        <location evidence="2">Cilium axoneme</location>
    </subcellularLocation>
    <subcellularLocation>
        <location evidence="7">Cell projection</location>
        <location evidence="7">Cilium</location>
        <location evidence="7">Flagellum</location>
    </subcellularLocation>
    <text evidence="2">Localizes in the cilium axoneme in a SPEF1-dependent manner.</text>
</comment>
<comment type="alternative products">
    <event type="alternative splicing"/>
    <isoform>
        <id>Q4G0P3-1</id>
        <name>1</name>
        <sequence type="displayed"/>
    </isoform>
    <isoform>
        <id>Q4G0P3-2</id>
        <name>2</name>
        <sequence type="described" ref="VSP_024684 VSP_024697 VSP_024698"/>
    </isoform>
    <isoform>
        <id>Q4G0P3-5</id>
        <name>4</name>
        <sequence type="described" ref="VSP_024691 VSP_024692"/>
    </isoform>
    <isoform>
        <id>Q4G0P3-6</id>
        <name>5</name>
        <sequence type="described" ref="VSP_024687 VSP_024688"/>
    </isoform>
    <isoform>
        <id>Q4G0P3-8</id>
        <name>6</name>
        <sequence type="described" ref="VSP_042692 VSP_042693 VSP_042694"/>
    </isoform>
    <isoform>
        <id>Q4G0P3-10</id>
        <name>7</name>
        <sequence type="described" ref="VSP_046818 VSP_042693 VSP_042694"/>
    </isoform>
</comment>
<comment type="disease" evidence="5 6">
    <disease id="DI-03560">
        <name>Ciliary dyskinesia, primary, 5</name>
        <acronym>CILD5</acronym>
        <description>An autosomal recessive form of primary dyskinesia, a disorder characterized by abnormalities of motile cilia. Respiratory infections leading to chronic inflammation and bronchiectasis are recurrent, due to defects in the respiratory cilia; reduced fertility is often observed in male patients due to abnormalities of sperm tails. Half of the patients exhibit randomization of left-right body asymmetry and situs inversus, due to dysfunction of monocilia at the embryonic node. Primary ciliary dyskinesia associated with situs inversus is referred to as Kartagener syndrome. CILD5 is characterized by early onset of a progressive decline in lung function due to an inability to clear mucus and particles from the airways. Affected individuals have recurrent infections of the sinuses, ears, airways, and lungs. Sperm motility is also decreased. Individuals with CILD5 do not have situs inversus.</description>
        <dbReference type="MIM" id="608647"/>
    </disease>
    <text>The disease is caused by variants affecting the gene represented in this entry.</text>
</comment>
<comment type="miscellaneous">
    <molecule>Isoform 2</molecule>
    <text evidence="11">May be produced at very low levels due to a premature stop codon in the mRNA, leading to nonsense-mediated mRNA decay.</text>
</comment>
<comment type="sequence caution" evidence="11">
    <conflict type="erroneous initiation">
        <sequence resource="EMBL-CDS" id="AAH28351"/>
    </conflict>
    <text>Extended N-terminus.</text>
</comment>
<comment type="sequence caution" evidence="11">
    <conflict type="frameshift">
        <sequence resource="EMBL-CDS" id="BAB15527"/>
    </conflict>
</comment>
<evidence type="ECO:0000250" key="1"/>
<evidence type="ECO:0000250" key="2">
    <source>
        <dbReference type="UniProtKB" id="Q80W93"/>
    </source>
</evidence>
<evidence type="ECO:0000255" key="3"/>
<evidence type="ECO:0000256" key="4">
    <source>
        <dbReference type="SAM" id="MobiDB-lite"/>
    </source>
</evidence>
<evidence type="ECO:0000269" key="5">
    <source>
    </source>
</evidence>
<evidence type="ECO:0000269" key="6">
    <source>
    </source>
</evidence>
<evidence type="ECO:0000269" key="7">
    <source>
    </source>
</evidence>
<evidence type="ECO:0000303" key="8">
    <source>
    </source>
</evidence>
<evidence type="ECO:0000303" key="9">
    <source>
    </source>
</evidence>
<evidence type="ECO:0000303" key="10">
    <source>
    </source>
</evidence>
<evidence type="ECO:0000305" key="11"/>
<evidence type="ECO:0007829" key="12">
    <source>
        <dbReference type="PDB" id="2E6J"/>
    </source>
</evidence>
<evidence type="ECO:0007829" key="13">
    <source>
        <dbReference type="PDB" id="2YS4"/>
    </source>
</evidence>
<feature type="chain" id="PRO_0000284844" description="Hydrocephalus-inducing protein homolog">
    <location>
        <begin position="1"/>
        <end position="5121"/>
    </location>
</feature>
<feature type="region of interest" description="Interaction with KIF9" evidence="2">
    <location>
        <begin position="363"/>
        <end position="754"/>
    </location>
</feature>
<feature type="region of interest" description="Disordered" evidence="4">
    <location>
        <begin position="956"/>
        <end position="987"/>
    </location>
</feature>
<feature type="region of interest" description="Disordered" evidence="4">
    <location>
        <begin position="1925"/>
        <end position="1951"/>
    </location>
</feature>
<feature type="region of interest" description="Disordered" evidence="4">
    <location>
        <begin position="2155"/>
        <end position="2186"/>
    </location>
</feature>
<feature type="region of interest" description="Disordered" evidence="4">
    <location>
        <begin position="2333"/>
        <end position="2459"/>
    </location>
</feature>
<feature type="region of interest" description="Disordered" evidence="4">
    <location>
        <begin position="2482"/>
        <end position="2534"/>
    </location>
</feature>
<feature type="region of interest" description="Disordered" evidence="4">
    <location>
        <begin position="2664"/>
        <end position="2684"/>
    </location>
</feature>
<feature type="region of interest" description="Disordered" evidence="4">
    <location>
        <begin position="3852"/>
        <end position="3874"/>
    </location>
</feature>
<feature type="coiled-coil region" evidence="3">
    <location>
        <begin position="1908"/>
        <end position="1933"/>
    </location>
</feature>
<feature type="coiled-coil region" evidence="3">
    <location>
        <begin position="2267"/>
        <end position="2365"/>
    </location>
</feature>
<feature type="coiled-coil region" evidence="3">
    <location>
        <begin position="2504"/>
        <end position="2549"/>
    </location>
</feature>
<feature type="compositionally biased region" description="Basic residues" evidence="4">
    <location>
        <begin position="956"/>
        <end position="967"/>
    </location>
</feature>
<feature type="compositionally biased region" description="Polar residues" evidence="4">
    <location>
        <begin position="1936"/>
        <end position="1951"/>
    </location>
</feature>
<feature type="compositionally biased region" description="Basic and acidic residues" evidence="4">
    <location>
        <begin position="2333"/>
        <end position="2360"/>
    </location>
</feature>
<feature type="compositionally biased region" description="Basic and acidic residues" evidence="4">
    <location>
        <begin position="2393"/>
        <end position="2418"/>
    </location>
</feature>
<feature type="compositionally biased region" description="Basic and acidic residues" evidence="4">
    <location>
        <begin position="2444"/>
        <end position="2453"/>
    </location>
</feature>
<feature type="compositionally biased region" description="Basic and acidic residues" evidence="4">
    <location>
        <begin position="2489"/>
        <end position="2498"/>
    </location>
</feature>
<feature type="compositionally biased region" description="Basic and acidic residues" evidence="4">
    <location>
        <begin position="2509"/>
        <end position="2534"/>
    </location>
</feature>
<feature type="compositionally biased region" description="Polar residues" evidence="4">
    <location>
        <begin position="2664"/>
        <end position="2679"/>
    </location>
</feature>
<feature type="compositionally biased region" description="Polar residues" evidence="4">
    <location>
        <begin position="3857"/>
        <end position="3874"/>
    </location>
</feature>
<feature type="splice variant" id="VSP_024684" description="In isoform 2." evidence="9">
    <location>
        <begin position="1"/>
        <end position="3823"/>
    </location>
</feature>
<feature type="splice variant" id="VSP_042692" description="In isoform 6." evidence="8">
    <original>M</original>
    <variation>MESAGGFKLGMEPLSGGGVCEKKKLLKM</variation>
    <location>
        <position position="1"/>
    </location>
</feature>
<feature type="splice variant" id="VSP_046818" description="In isoform 7." evidence="8">
    <original>M</original>
    <variation>MESAGGFKLGEKKKLLKM</variation>
    <location>
        <position position="1"/>
    </location>
</feature>
<feature type="splice variant" id="VSP_024687" description="In isoform 5." evidence="9">
    <original>CVVPALHLVNTEVDFG</original>
    <variation>YCSPACSSPESPPSLQ</variation>
    <location>
        <begin position="693"/>
        <end position="708"/>
    </location>
</feature>
<feature type="splice variant" id="VSP_024688" description="In isoform 5." evidence="9">
    <location>
        <begin position="709"/>
        <end position="5121"/>
    </location>
</feature>
<feature type="splice variant" id="VSP_042693" description="In isoform 6 and isoform 7." evidence="8">
    <original>S</original>
    <variation>R</variation>
    <location>
        <position position="923"/>
    </location>
</feature>
<feature type="splice variant" id="VSP_042694" description="In isoform 6 and isoform 7." evidence="8">
    <location>
        <begin position="924"/>
        <end position="5121"/>
    </location>
</feature>
<feature type="splice variant" id="VSP_024691" description="In isoform 4." evidence="8 10">
    <original>IVK</original>
    <variation>VRG</variation>
    <location>
        <begin position="1015"/>
        <end position="1017"/>
    </location>
</feature>
<feature type="splice variant" id="VSP_024692" description="In isoform 4." evidence="8 10">
    <location>
        <begin position="1018"/>
        <end position="5121"/>
    </location>
</feature>
<feature type="splice variant" id="VSP_024697" description="In isoform 2." evidence="9">
    <original>E</original>
    <variation>M</variation>
    <location>
        <position position="3824"/>
    </location>
</feature>
<feature type="splice variant" id="VSP_024698" description="In isoform 2." evidence="9">
    <original>GTFSFEFQPLKAGETFGRLTLHNTDLGYYQYELYLKATPALPEKPVHFQTVLGSSQIILVKFINYTRQRTEYYCRTDCTDFHAEKLINAAPGGQGGTEASVEVLFEPSHLGETKGILILSSLAGGEYIIPLFGMALPPKPQGPFSIRAGYSIIIPFKNVFYHMVTFSIIVDNPAFTIRAGESVRPKKINNITVSFEGNPSGSKTPITTKLTVSCPPGEGSETGVKWVYYLKGITL</original>
    <variation>RWGLTASSRLECSGMIIAPCSLKLLQSRPPPASAS</variation>
    <location>
        <begin position="4887"/>
        <end position="5121"/>
    </location>
</feature>
<feature type="sequence variant" id="VAR_031837" description="In dbSNP:rs7200485.">
    <original>R</original>
    <variation>P</variation>
    <location>
        <position position="451"/>
    </location>
</feature>
<feature type="sequence variant" id="VAR_031838" description="In dbSNP:rs7200126.">
    <original>T</original>
    <variation>N</variation>
    <location>
        <position position="584"/>
    </location>
</feature>
<feature type="sequence variant" id="VAR_031839" description="In dbSNP:rs10744982.">
    <original>T</original>
    <variation>A</variation>
    <location>
        <position position="690"/>
    </location>
</feature>
<feature type="sequence variant" id="VAR_031840" description="In dbSNP:rs3817211.">
    <original>N</original>
    <variation>D</variation>
    <location>
        <position position="724"/>
    </location>
</feature>
<feature type="sequence variant" id="VAR_059667" description="In dbSNP:rs6416709.">
    <original>I</original>
    <variation>V</variation>
    <location>
        <position position="1077"/>
    </location>
</feature>
<feature type="sequence variant" id="VAR_059668" description="In dbSNP:rs1774513.">
    <original>V</original>
    <variation>L</variation>
    <location>
        <position position="1228"/>
    </location>
</feature>
<feature type="sequence variant" id="VAR_059669" description="In dbSNP:rs1774303.">
    <original>I</original>
    <variation>V</variation>
    <location>
        <position position="1534"/>
    </location>
</feature>
<feature type="sequence variant" id="VAR_051036" description="In dbSNP:rs783762.">
    <original>V</original>
    <variation>M</variation>
    <location>
        <position position="1718"/>
    </location>
</feature>
<feature type="sequence variant" id="VAR_051037" description="In dbSNP:rs783732.">
    <original>R</original>
    <variation>H</variation>
    <location>
        <position position="1892"/>
    </location>
</feature>
<feature type="sequence variant" id="VAR_051038" description="In dbSNP:rs17321570.">
    <original>R</original>
    <variation>Q</variation>
    <location>
        <position position="1952"/>
    </location>
</feature>
<feature type="sequence variant" id="VAR_059670" description="In dbSNP:rs1774541.">
    <original>R</original>
    <variation>C</variation>
    <location>
        <position position="2087"/>
    </location>
</feature>
<feature type="sequence variant" id="VAR_051039" description="In dbSNP:rs1798337.">
    <original>V</original>
    <variation>M</variation>
    <location>
        <position position="2099"/>
    </location>
</feature>
<feature type="sequence variant" id="VAR_059671" description="In dbSNP:rs2258307.">
    <original>Q</original>
    <variation>R</variation>
    <location>
        <position position="2242"/>
    </location>
</feature>
<feature type="sequence variant" id="VAR_051040" description="In dbSNP:rs1815707.">
    <original>Q</original>
    <variation>R</variation>
    <location>
        <position position="2276"/>
    </location>
</feature>
<feature type="sequence variant" id="VAR_059672" description="In dbSNP:rs1774360.">
    <original>R</original>
    <variation>G</variation>
    <location>
        <position position="2298"/>
    </location>
</feature>
<feature type="sequence variant" id="VAR_051041" description="In dbSNP:rs2502726.">
    <original>E</original>
    <variation>G</variation>
    <location>
        <position position="2306"/>
    </location>
</feature>
<feature type="sequence variant" id="VAR_051042" description="In dbSNP:rs1798532.">
    <original>N</original>
    <variation>I</variation>
    <location>
        <position position="2445"/>
    </location>
</feature>
<feature type="sequence variant" id="VAR_061666" description="In dbSNP:rs1798531.">
    <original>P</original>
    <variation>Q</variation>
    <location>
        <position position="2455"/>
    </location>
</feature>
<feature type="sequence variant" id="VAR_051043" description="In dbSNP:rs1798529.">
    <original>L</original>
    <variation>S</variation>
    <location>
        <position position="2502"/>
    </location>
</feature>
<feature type="sequence variant" id="VAR_059673" description="In dbSNP:rs1798528.">
    <original>K</original>
    <variation>E</variation>
    <location>
        <position position="2530"/>
    </location>
</feature>
<feature type="sequence variant" id="VAR_051044" description="In dbSNP:rs8044142.">
    <original>G</original>
    <variation>E</variation>
    <location>
        <position position="2558"/>
    </location>
</feature>
<feature type="sequence variant" id="VAR_059674" description="In dbSNP:rs8044001.">
    <original>D</original>
    <variation>N</variation>
    <location>
        <position position="2570"/>
    </location>
</feature>
<feature type="sequence variant" id="VAR_051045" description="In dbSNP:rs1774395.">
    <original>K</original>
    <variation>R</variation>
    <location>
        <position position="2589"/>
    </location>
</feature>
<feature type="sequence variant" id="VAR_059675" description="In dbSNP:rs1774449.">
    <original>I</original>
    <variation>S</variation>
    <location>
        <position position="2694"/>
    </location>
</feature>
<feature type="sequence variant" id="VAR_051046" description="In dbSNP:rs11075812.">
    <original>P</original>
    <variation>L</variation>
    <location>
        <position position="2932"/>
    </location>
</feature>
<feature type="sequence variant" id="VAR_051047" description="In dbSNP:rs8047935.">
    <original>E</original>
    <variation>K</variation>
    <location>
        <position position="2937"/>
    </location>
</feature>
<feature type="sequence variant" id="VAR_051048" description="In dbSNP:rs7188837.">
    <original>R</original>
    <variation>K</variation>
    <location>
        <position position="2939"/>
    </location>
</feature>
<feature type="sequence variant" id="VAR_051049" description="In dbSNP:rs12102425.">
    <original>E</original>
    <variation>G</variation>
    <location>
        <position position="2994"/>
    </location>
</feature>
<feature type="sequence variant" id="VAR_051050" description="In dbSNP:rs1774423.">
    <original>T</original>
    <variation>R</variation>
    <location>
        <position position="3116"/>
    </location>
</feature>
<feature type="sequence variant" id="VAR_051051" description="In dbSNP:rs7197263.">
    <original>Y</original>
    <variation>D</variation>
    <location>
        <position position="3269"/>
    </location>
</feature>
<feature type="sequence variant" id="VAR_059676" description="In dbSNP:rs1798440.">
    <original>A</original>
    <variation>P</variation>
    <location>
        <position position="3291"/>
    </location>
</feature>
<feature type="sequence variant" id="VAR_059677" description="In dbSNP:rs1774331.">
    <original>L</original>
    <variation>P</variation>
    <location>
        <position position="3316"/>
    </location>
</feature>
<feature type="sequence variant" id="VAR_059678" description="In dbSNP:rs1774504.">
    <original>A</original>
    <variation>T</variation>
    <location>
        <position position="3739"/>
    </location>
</feature>
<feature type="sequence variant" id="VAR_059679" description="In dbSNP:rs1798413.">
    <original>V</original>
    <variation>I</variation>
    <location>
        <position position="3742"/>
    </location>
</feature>
<feature type="sequence variant" id="VAR_051052" description="In dbSNP:rs13338821.">
    <original>R</original>
    <variation>H</variation>
    <location>
        <position position="3811"/>
    </location>
</feature>
<feature type="sequence variant" id="VAR_059680" description="In dbSNP:rs1798325.">
    <original>V</original>
    <variation>L</variation>
    <location>
        <position position="3840"/>
    </location>
</feature>
<feature type="sequence variant" id="VAR_059681" description="In dbSNP:rs7192347.">
    <original>M</original>
    <variation>R</variation>
    <location>
        <position position="3869"/>
    </location>
</feature>
<feature type="sequence variant" id="VAR_051053" description="In dbSNP:rs1626593.">
    <original>V</original>
    <variation>M</variation>
    <location>
        <position position="3899"/>
    </location>
</feature>
<feature type="sequence variant" id="VAR_059682" description="In dbSNP:rs1539302.">
    <original>T</original>
    <variation>A</variation>
    <location>
        <position position="4005"/>
    </location>
</feature>
<feature type="sequence variant" id="VAR_051054" description="In dbSNP:rs11075798.">
    <original>A</original>
    <variation>T</variation>
    <location>
        <position position="4026"/>
    </location>
</feature>
<feature type="sequence variant" id="VAR_051055" description="In dbSNP:rs1774416.">
    <original>K</original>
    <variation>R</variation>
    <location>
        <position position="4088"/>
    </location>
</feature>
<feature type="sequence variant" id="VAR_059683" description="In dbSNP:rs1798314.">
    <original>E</original>
    <variation>Q</variation>
    <location>
        <position position="4160"/>
    </location>
</feature>
<feature type="sequence variant" id="VAR_051056" description="In dbSNP:rs111318087.">
    <original>H</original>
    <variation>Y</variation>
    <location>
        <position position="4270"/>
    </location>
</feature>
<feature type="sequence variant" id="VAR_059684" description="In dbSNP:rs1770434.">
    <original>S</original>
    <variation>C</variation>
    <location>
        <position position="4363"/>
    </location>
</feature>
<feature type="sequence variant" id="VAR_059685" description="In dbSNP:rs1774480.">
    <original>K</original>
    <variation>E</variation>
    <location>
        <position position="4412"/>
    </location>
</feature>
<feature type="sequence variant" id="VAR_059686" description="In dbSNP:rs1770442.">
    <original>M</original>
    <variation>L</variation>
    <location>
        <position position="4552"/>
    </location>
</feature>
<feature type="sequence variant" id="VAR_051058" description="In dbSNP:rs783898.">
    <original>N</original>
    <variation>K</variation>
    <location>
        <position position="4606"/>
    </location>
</feature>
<feature type="sequence variant" id="VAR_059687" description="In dbSNP:rs2795652.">
    <original>R</original>
    <variation>Q</variation>
    <location>
        <position position="4869"/>
    </location>
</feature>
<feature type="sequence conflict" description="In Ref. 1; BAB14314." evidence="11" ref="1">
    <original>L</original>
    <variation>P</variation>
    <location>
        <position position="299"/>
    </location>
</feature>
<feature type="sequence conflict" description="In Ref. 3; AAH28351." evidence="11" ref="3">
    <original>L</original>
    <variation>M</variation>
    <location>
        <position position="313"/>
    </location>
</feature>
<feature type="sequence conflict" description="In Ref. 1; BAB14314." evidence="11" ref="1">
    <original>K</original>
    <variation>T</variation>
    <location>
        <position position="460"/>
    </location>
</feature>
<feature type="sequence conflict" description="In Ref. 3; AAH28351." evidence="11" ref="3">
    <original>T</original>
    <variation>I</variation>
    <location>
        <position position="532"/>
    </location>
</feature>
<feature type="sequence conflict" description="In Ref. 1; BAG61096." evidence="11" ref="1">
    <original>T</original>
    <variation>I</variation>
    <location>
        <position position="584"/>
    </location>
</feature>
<feature type="sequence conflict" description="In Ref. 1; BAG61096." evidence="11" ref="1">
    <original>D</original>
    <variation>N</variation>
    <location>
        <position position="881"/>
    </location>
</feature>
<feature type="sequence conflict" description="In Ref. 3; AAH43273." evidence="11" ref="3">
    <original>S</original>
    <variation>N</variation>
    <location>
        <position position="3945"/>
    </location>
</feature>
<feature type="sequence conflict" description="In Ref. 3; AAH43273." evidence="11" ref="3">
    <original>P</original>
    <variation>T</variation>
    <location>
        <position position="4663"/>
    </location>
</feature>
<feature type="sequence conflict" description="In Ref. 1; BAB15527." evidence="11" ref="1">
    <original>G</original>
    <variation>V</variation>
    <location>
        <position position="4667"/>
    </location>
</feature>
<feature type="strand" evidence="13">
    <location>
        <begin position="204"/>
        <end position="206"/>
    </location>
</feature>
<feature type="strand" evidence="13">
    <location>
        <begin position="210"/>
        <end position="215"/>
    </location>
</feature>
<feature type="strand" evidence="13">
    <location>
        <begin position="217"/>
        <end position="224"/>
    </location>
</feature>
<feature type="strand" evidence="13">
    <location>
        <begin position="227"/>
        <end position="229"/>
    </location>
</feature>
<feature type="strand" evidence="13">
    <location>
        <begin position="231"/>
        <end position="236"/>
    </location>
</feature>
<feature type="strand" evidence="13">
    <location>
        <begin position="241"/>
        <end position="250"/>
    </location>
</feature>
<feature type="strand" evidence="13">
    <location>
        <begin position="255"/>
        <end position="262"/>
    </location>
</feature>
<feature type="strand" evidence="13">
    <location>
        <begin position="265"/>
        <end position="268"/>
    </location>
</feature>
<feature type="strand" evidence="13">
    <location>
        <begin position="275"/>
        <end position="281"/>
    </location>
</feature>
<feature type="strand" evidence="12">
    <location>
        <begin position="460"/>
        <end position="464"/>
    </location>
</feature>
<feature type="strand" evidence="12">
    <location>
        <begin position="466"/>
        <end position="476"/>
    </location>
</feature>
<feature type="strand" evidence="12">
    <location>
        <begin position="479"/>
        <end position="487"/>
    </location>
</feature>
<feature type="strand" evidence="12">
    <location>
        <begin position="493"/>
        <end position="497"/>
    </location>
</feature>
<feature type="helix" evidence="12">
    <location>
        <begin position="503"/>
        <end position="507"/>
    </location>
</feature>
<feature type="strand" evidence="12">
    <location>
        <begin position="509"/>
        <end position="517"/>
    </location>
</feature>
<feature type="strand" evidence="12">
    <location>
        <begin position="524"/>
        <end position="529"/>
    </location>
</feature>
<feature type="strand" evidence="12">
    <location>
        <begin position="535"/>
        <end position="541"/>
    </location>
</feature>
<feature type="strand" evidence="12">
    <location>
        <begin position="543"/>
        <end position="547"/>
    </location>
</feature>
<feature type="strand" evidence="12">
    <location>
        <begin position="554"/>
        <end position="561"/>
    </location>
</feature>
<proteinExistence type="evidence at protein level"/>
<accession>Q4G0P3</accession>
<accession>A6NC70</accession>
<accession>A6NLZ0</accession>
<accession>B4DQY4</accession>
<accession>B4DRN4</accession>
<accession>F5H6V3</accession>
<accession>Q8N3H8</accession>
<accession>Q8N3P6</accession>
<accession>Q8TC08</accession>
<accession>Q96JG3</accession>
<accession>Q96SS4</accession>
<accession>Q9H5U3</accession>
<accession>Q9H9B8</accession>
<accession>Q9NTI0</accession>
<accession>Q9UBE5</accession>
<name>HYDIN_HUMAN</name>
<gene>
    <name type="primary">HYDIN</name>
    <name type="synonym">HYDIN1</name>
    <name type="synonym">KIAA1864</name>
</gene>
<dbReference type="EMBL" id="AK022933">
    <property type="protein sequence ID" value="BAB14314.1"/>
    <property type="molecule type" value="mRNA"/>
</dbReference>
<dbReference type="EMBL" id="AK026688">
    <property type="protein sequence ID" value="BAB15527.1"/>
    <property type="status" value="ALT_FRAME"/>
    <property type="molecule type" value="mRNA"/>
</dbReference>
<dbReference type="EMBL" id="AK299016">
    <property type="protein sequence ID" value="BAG61096.1"/>
    <property type="molecule type" value="mRNA"/>
</dbReference>
<dbReference type="EMBL" id="AK299348">
    <property type="protein sequence ID" value="BAG61346.1"/>
    <property type="molecule type" value="mRNA"/>
</dbReference>
<dbReference type="EMBL" id="AC027281">
    <property type="status" value="NOT_ANNOTATED_CDS"/>
    <property type="molecule type" value="Genomic_DNA"/>
</dbReference>
<dbReference type="EMBL" id="AC099495">
    <property type="status" value="NOT_ANNOTATED_CDS"/>
    <property type="molecule type" value="Genomic_DNA"/>
</dbReference>
<dbReference type="EMBL" id="AC138625">
    <property type="status" value="NOT_ANNOTATED_CDS"/>
    <property type="molecule type" value="Genomic_DNA"/>
</dbReference>
<dbReference type="EMBL" id="BC028351">
    <property type="protein sequence ID" value="AAH28351.2"/>
    <property type="status" value="ALT_INIT"/>
    <property type="molecule type" value="mRNA"/>
</dbReference>
<dbReference type="EMBL" id="BC043273">
    <property type="protein sequence ID" value="AAH43273.1"/>
    <property type="molecule type" value="mRNA"/>
</dbReference>
<dbReference type="EMBL" id="AL122038">
    <property type="protein sequence ID" value="CAB59178.1"/>
    <property type="molecule type" value="mRNA"/>
</dbReference>
<dbReference type="EMBL" id="AL133042">
    <property type="protein sequence ID" value="CAB61370.1"/>
    <property type="molecule type" value="mRNA"/>
</dbReference>
<dbReference type="EMBL" id="AL137259">
    <property type="protein sequence ID" value="CAB70660.1"/>
    <property type="molecule type" value="mRNA"/>
</dbReference>
<dbReference type="CCDS" id="CCDS10897.1">
    <molecule id="Q4G0P3-5"/>
</dbReference>
<dbReference type="CCDS" id="CCDS56004.1">
    <molecule id="Q4G0P3-8"/>
</dbReference>
<dbReference type="CCDS" id="CCDS56005.1">
    <molecule id="Q4G0P3-10"/>
</dbReference>
<dbReference type="CCDS" id="CCDS59269.1">
    <molecule id="Q4G0P3-1"/>
</dbReference>
<dbReference type="PIR" id="T42699">
    <property type="entry name" value="T42699"/>
</dbReference>
<dbReference type="PIR" id="T46330">
    <property type="entry name" value="T46330"/>
</dbReference>
<dbReference type="RefSeq" id="NP_001185471.1">
    <molecule id="Q4G0P3-8"/>
    <property type="nucleotide sequence ID" value="NM_001198542.1"/>
</dbReference>
<dbReference type="RefSeq" id="NP_001185472.1">
    <molecule id="Q4G0P3-10"/>
    <property type="nucleotide sequence ID" value="NM_001198543.1"/>
</dbReference>
<dbReference type="RefSeq" id="NP_001257903.1">
    <molecule id="Q4G0P3-1"/>
    <property type="nucleotide sequence ID" value="NM_001270974.2"/>
</dbReference>
<dbReference type="RefSeq" id="NP_060028.2">
    <molecule id="Q4G0P3-5"/>
    <property type="nucleotide sequence ID" value="NM_017558.4"/>
</dbReference>
<dbReference type="PDB" id="2E6J">
    <property type="method" value="NMR"/>
    <property type="chains" value="A=459-563"/>
</dbReference>
<dbReference type="PDB" id="2YS4">
    <property type="method" value="NMR"/>
    <property type="chains" value="A=182-296"/>
</dbReference>
<dbReference type="PDBsum" id="2E6J"/>
<dbReference type="PDBsum" id="2YS4"/>
<dbReference type="BMRB" id="Q4G0P3"/>
<dbReference type="SMR" id="Q4G0P3"/>
<dbReference type="BioGRID" id="120142">
    <property type="interactions" value="20"/>
</dbReference>
<dbReference type="FunCoup" id="Q4G0P3">
    <property type="interactions" value="60"/>
</dbReference>
<dbReference type="IntAct" id="Q4G0P3">
    <property type="interactions" value="3"/>
</dbReference>
<dbReference type="STRING" id="9606.ENSP00000377197"/>
<dbReference type="GlyGen" id="Q4G0P3">
    <property type="glycosylation" value="3 sites, 1 O-linked glycan (2 sites)"/>
</dbReference>
<dbReference type="iPTMnet" id="Q4G0P3"/>
<dbReference type="PhosphoSitePlus" id="Q4G0P3"/>
<dbReference type="BioMuta" id="HYDIN"/>
<dbReference type="DMDM" id="327478578"/>
<dbReference type="jPOST" id="Q4G0P3"/>
<dbReference type="MassIVE" id="Q4G0P3"/>
<dbReference type="PaxDb" id="9606-ENSP00000377197"/>
<dbReference type="PeptideAtlas" id="Q4G0P3"/>
<dbReference type="ProteomicsDB" id="27301"/>
<dbReference type="ProteomicsDB" id="62119">
    <molecule id="Q4G0P3-1"/>
</dbReference>
<dbReference type="ProteomicsDB" id="62120">
    <molecule id="Q4G0P3-2"/>
</dbReference>
<dbReference type="ProteomicsDB" id="62121">
    <molecule id="Q4G0P3-5"/>
</dbReference>
<dbReference type="ProteomicsDB" id="62122">
    <molecule id="Q4G0P3-6"/>
</dbReference>
<dbReference type="ProteomicsDB" id="62123">
    <molecule id="Q4G0P3-8"/>
</dbReference>
<dbReference type="Antibodypedia" id="66504">
    <property type="antibodies" value="39 antibodies from 11 providers"/>
</dbReference>
<dbReference type="DNASU" id="54768"/>
<dbReference type="Ensembl" id="ENST00000321489.9">
    <molecule id="Q4G0P3-5"/>
    <property type="protein sequence ID" value="ENSP00000314736.5"/>
    <property type="gene ID" value="ENSG00000157423.18"/>
</dbReference>
<dbReference type="Ensembl" id="ENST00000393567.7">
    <molecule id="Q4G0P3-1"/>
    <property type="protein sequence ID" value="ENSP00000377197.2"/>
    <property type="gene ID" value="ENSG00000157423.18"/>
</dbReference>
<dbReference type="Ensembl" id="ENST00000538248.5">
    <molecule id="Q4G0P3-8"/>
    <property type="protein sequence ID" value="ENSP00000444970.1"/>
    <property type="gene ID" value="ENSG00000157423.18"/>
</dbReference>
<dbReference type="Ensembl" id="ENST00000541601.5">
    <molecule id="Q4G0P3-10"/>
    <property type="protein sequence ID" value="ENSP00000437341.1"/>
    <property type="gene ID" value="ENSG00000157423.18"/>
</dbReference>
<dbReference type="GeneID" id="54768"/>
<dbReference type="KEGG" id="hsa:54768"/>
<dbReference type="MANE-Select" id="ENST00000393567.7">
    <property type="protein sequence ID" value="ENSP00000377197.2"/>
    <property type="RefSeq nucleotide sequence ID" value="NM_001270974.2"/>
    <property type="RefSeq protein sequence ID" value="NP_001257903.1"/>
</dbReference>
<dbReference type="UCSC" id="uc010vmc.3">
    <molecule id="Q4G0P3-1"/>
    <property type="organism name" value="human"/>
</dbReference>
<dbReference type="AGR" id="HGNC:19368"/>
<dbReference type="CTD" id="54768"/>
<dbReference type="DisGeNET" id="54768"/>
<dbReference type="GeneCards" id="HYDIN"/>
<dbReference type="GeneReviews" id="HYDIN"/>
<dbReference type="HGNC" id="HGNC:19368">
    <property type="gene designation" value="HYDIN"/>
</dbReference>
<dbReference type="HPA" id="ENSG00000157423">
    <property type="expression patterns" value="Tissue enhanced (retina)"/>
</dbReference>
<dbReference type="MalaCards" id="HYDIN"/>
<dbReference type="MIM" id="608647">
    <property type="type" value="phenotype"/>
</dbReference>
<dbReference type="MIM" id="610812">
    <property type="type" value="gene"/>
</dbReference>
<dbReference type="neXtProt" id="NX_Q4G0P3"/>
<dbReference type="OpenTargets" id="ENSG00000157423"/>
<dbReference type="Orphanet" id="244">
    <property type="disease" value="Primary ciliary dyskinesia"/>
</dbReference>
<dbReference type="PharmGKB" id="PA134866950"/>
<dbReference type="VEuPathDB" id="HostDB:ENSG00000157423"/>
<dbReference type="eggNOG" id="ENOG502QQ4F">
    <property type="taxonomic scope" value="Eukaryota"/>
</dbReference>
<dbReference type="GeneTree" id="ENSGT00610000086095"/>
<dbReference type="HOGENOM" id="CLU_000116_1_0_1"/>
<dbReference type="InParanoid" id="Q4G0P3"/>
<dbReference type="OMA" id="PCEWFVQ"/>
<dbReference type="OrthoDB" id="442692at2759"/>
<dbReference type="PAN-GO" id="Q4G0P3">
    <property type="GO annotations" value="3 GO annotations based on evolutionary models"/>
</dbReference>
<dbReference type="PhylomeDB" id="Q4G0P3"/>
<dbReference type="TreeFam" id="TF340616"/>
<dbReference type="PathwayCommons" id="Q4G0P3"/>
<dbReference type="SignaLink" id="Q4G0P3"/>
<dbReference type="SIGNOR" id="Q4G0P3"/>
<dbReference type="BioGRID-ORCS" id="54768">
    <property type="hits" value="47 hits in 1134 CRISPR screens"/>
</dbReference>
<dbReference type="ChiTaRS" id="HYDIN">
    <property type="organism name" value="human"/>
</dbReference>
<dbReference type="EvolutionaryTrace" id="Q4G0P3"/>
<dbReference type="GenomeRNAi" id="54768"/>
<dbReference type="Pharos" id="Q4G0P3">
    <property type="development level" value="Tbio"/>
</dbReference>
<dbReference type="PRO" id="PR:Q4G0P3"/>
<dbReference type="Proteomes" id="UP000005640">
    <property type="component" value="Chromosome 16"/>
</dbReference>
<dbReference type="RNAct" id="Q4G0P3">
    <property type="molecule type" value="protein"/>
</dbReference>
<dbReference type="Bgee" id="ENSG00000157423">
    <property type="expression patterns" value="Expressed in right uterine tube and 102 other cell types or tissues"/>
</dbReference>
<dbReference type="ExpressionAtlas" id="Q4G0P3">
    <property type="expression patterns" value="baseline and differential"/>
</dbReference>
<dbReference type="GO" id="GO:1990716">
    <property type="term" value="C:axonemal central apparatus"/>
    <property type="evidence" value="ECO:0000250"/>
    <property type="project" value="UniProtKB"/>
</dbReference>
<dbReference type="GO" id="GO:1990718">
    <property type="term" value="C:axonemal central pair projection"/>
    <property type="evidence" value="ECO:0007669"/>
    <property type="project" value="Ensembl"/>
</dbReference>
<dbReference type="GO" id="GO:0005930">
    <property type="term" value="C:axoneme"/>
    <property type="evidence" value="ECO:0000318"/>
    <property type="project" value="GO_Central"/>
</dbReference>
<dbReference type="GO" id="GO:0005929">
    <property type="term" value="C:cilium"/>
    <property type="evidence" value="ECO:0000314"/>
    <property type="project" value="UniProtKB"/>
</dbReference>
<dbReference type="GO" id="GO:0036126">
    <property type="term" value="C:sperm flagellum"/>
    <property type="evidence" value="ECO:0000314"/>
    <property type="project" value="UniProtKB"/>
</dbReference>
<dbReference type="GO" id="GO:1904158">
    <property type="term" value="P:axonemal central apparatus assembly"/>
    <property type="evidence" value="ECO:0000318"/>
    <property type="project" value="GO_Central"/>
</dbReference>
<dbReference type="GO" id="GO:0003341">
    <property type="term" value="P:cilium movement"/>
    <property type="evidence" value="ECO:0000318"/>
    <property type="project" value="GO_Central"/>
</dbReference>
<dbReference type="GO" id="GO:0002064">
    <property type="term" value="P:epithelial cell development"/>
    <property type="evidence" value="ECO:0007669"/>
    <property type="project" value="Ensembl"/>
</dbReference>
<dbReference type="GO" id="GO:0060438">
    <property type="term" value="P:trachea development"/>
    <property type="evidence" value="ECO:0007669"/>
    <property type="project" value="Ensembl"/>
</dbReference>
<dbReference type="GO" id="GO:0021591">
    <property type="term" value="P:ventricular system development"/>
    <property type="evidence" value="ECO:0007669"/>
    <property type="project" value="Ensembl"/>
</dbReference>
<dbReference type="Gene3D" id="2.60.40.10">
    <property type="entry name" value="Immunoglobulins"/>
    <property type="match status" value="22"/>
</dbReference>
<dbReference type="Gene3D" id="3.40.50.300">
    <property type="entry name" value="P-loop containing nucleotide triphosphate hydrolases"/>
    <property type="match status" value="1"/>
</dbReference>
<dbReference type="InterPro" id="IPR033305">
    <property type="entry name" value="Hydin-like"/>
</dbReference>
<dbReference type="InterPro" id="IPR033768">
    <property type="entry name" value="Hydin_ADK"/>
</dbReference>
<dbReference type="InterPro" id="IPR053879">
    <property type="entry name" value="HYDIN_VesB_CFA65-like_Ig"/>
</dbReference>
<dbReference type="InterPro" id="IPR013783">
    <property type="entry name" value="Ig-like_fold"/>
</dbReference>
<dbReference type="InterPro" id="IPR027417">
    <property type="entry name" value="P-loop_NTPase"/>
</dbReference>
<dbReference type="PANTHER" id="PTHR23053">
    <property type="entry name" value="DLEC1 DELETED IN LUNG AND ESOPHAGEAL CANCER 1"/>
    <property type="match status" value="1"/>
</dbReference>
<dbReference type="PANTHER" id="PTHR23053:SF0">
    <property type="entry name" value="HYDROCEPHALUS-INDUCING PROTEIN HOMOLOG"/>
    <property type="match status" value="1"/>
</dbReference>
<dbReference type="Pfam" id="PF17213">
    <property type="entry name" value="Hydin_ADK"/>
    <property type="match status" value="1"/>
</dbReference>
<dbReference type="Pfam" id="PF22544">
    <property type="entry name" value="HYDIN_VesB_CFA65-like_Ig"/>
    <property type="match status" value="3"/>
</dbReference>
<dbReference type="Pfam" id="PF24507">
    <property type="entry name" value="Ig_CFAP65_4th"/>
    <property type="match status" value="3"/>
</dbReference>
<dbReference type="Pfam" id="PF24816">
    <property type="entry name" value="Ig_CFAP65__9th"/>
    <property type="match status" value="1"/>
</dbReference>
<sequence length="5121" mass="575892">MTSRRLEESMGAVQMGLVNMFKGFQSKVLPPLSPKVVTEEEVNRMLTPSEFLKEMSLTTEQRLAKTRLMCRPQIIELLDMGETTHQKFSGIDLDQALFQPFPSEIIFQNYTPCEVYEVPLILRNNDKIPRLVKVVEESSPYFKVISPKDIGHKVAPGVPSIFRILFTPEENKDYAHTLTCVTEREKFIVPIKARGARAILDFPDKLNFSTCPVKYSTQKILLVRNIGNKNAVFHIKTCRPFSIEPAIGTLNVGESMQLEVEFEPQSVGDHSGRLIVCYDTGEKVFVSLYGAAIDMNIRLDKNSLTIEKTYISLANQRTITIHNRSNIIAHFLWKVFATQQEEDREKYRACDDLIKEEKDETDEFFEECITDPLLREHLSVLSRTFANQRRLVQGDSKLFFNNVFTVEPLEGDVWPNSSAEITVYFNPLEAKLYQQTIYCDILGREIRLPLRIKGEGMGPKIHFNFELLDIGKVFTGSAHCYEAILYNKGSIDALFNMTPPTSALGACFVFSPKEGIIEPSGVQAIQISFSSTILGNFEEEFLVNVNGSPEPVKLTIRGCVIGPTFHFNVPALHFGDVSFGFPHTLICSLNNTSLIPMTYKLRIPGDGLGHKSISYCEQHVDYKRPSWTKEEISSMKPKEFTISPDCGTIRPQGFAAIRVTLCSNTVQKYELALVVDVEGIGEEVLALLITARCVVPALHLVNTEVDFGHCFLKYPYEKTLQLANQDDLPGFYEVQPQVCEEVPTVLFSSPTPSGVISPSSTIHIPLVLETQVTGEHRSTVYISIFGSQDPPLVCHLKSAGEGPVIYVHPNQVDFGNIYVLKDSSRILNLCNQSFIPAFFQAHMAHKKSLWTIEPNEGMVPPETDVQLALTANLNDTLTFKDCVILDIENSSTYRIPVQASGTGSTIVSDKPFAPELNLGAHFSLDTHYYHFKLINKGRRIQQLFWMNDSFRPQAKLSKKGRVKKGHAHVQPQPSGSQEPRDPQSPVFHLHPASMELYPGQAIDVILEGYSATPRIVKEKLVCHAIIGAQKGKSLVMAVNITCEFVAPLIQLSTKQLIYRLEKKPNSILKPDYQPLAIKNISTLPVNLLLSTSGPFFICETDKSLLPATPEPIKLEIDEEKNLLIKFDPSYRNDLNNWVAEEILAIKYVEHPQIDSLDLRGEVHYPNLSFETKELDFGCILNDTELIRYVTITNCSPLVVKFRWFFLVNDEENQIRFVTLPKKPYSAPVSQMESIPATSEAASPPAILVTVESPEMDLNDFVKTVLVDEDARPEEKELRKTKASSVISDEIKISSTEIERIYSSQSQVEDQESLQTCEQNEMLSIGIEEVFDILPLFGVLQPHSSHQISFTFYGHANIIAQAKALCEVEEGPTYEITLKGEASLVNYSFDTKDIHYGLQLFDHVTEREITLTNMGKVGFEFKVLTDHQSSPDNLLPGVPLILPVSGFISSHQEQVLKVYYLPGVPEVFKRSFQIQIAHLDPENITLSGEGIFPQICLDLPRNLTANEKYEMFLNQARKNTDKEYNKCEMLDHFDIITEEVPEDEPAEVSAHLQMEVERLIVQSYVLEHQKTTTPDPMDDPCFSHRSRRKLAKIQLPEYILDFGYIILGEVRTHIIKIINTSHFPVSFHADKRVLHETGFSTELDRVKNLPHCETEIFEVRFDPQGANLPVGSKEVILPIKVVGGPTVHICLQAKVTIPTMTLSRGKVDFATIQCGQCLVETIQLSNHLQVPCEWFVQSQKPVDKLEKHMPKYLRQKLRAELKPKTRIFEIQPISGVLDPGEKSNVQVKFMPKEEKFYSQTLVFQIAQSAQKLTLLARGQGLEPRLEFSPSVLDLGPLLLCAPGDEAEVIVKNPCNFPIEFYSLEFDQQYLIEEKILRKLKGYDSYNTLLLPPRNPGEKLPPELYEYFKEIKKSKEEQMRAKYLENLAQENEEEDITSSDQGTSNSTKRTSLSRGISVTSNLEEWHALLVESKTYLEEEEDEESLEKIIFQTDKLQSIDSHSMEEVGEVENNPVSKAIARHLGIDISAEGRLAKNRKGIAIIIHGTPLSGKSANAVSVAKYYNAACLSIDSIVLEAVANSNNIPGIRARELCIRAAIEQSVKEGEEAAQEAAVGQNVIGQGRLSTDTLGKLASEMTLVAPEIKPGKSVRGSVVITKSKADSHGSGSQKQHHSHQSETPQISSSPLPPGPIHRWLSVSPSVGGETGLMSCVLPDELLVQILAERIQLSDCYRGVVFDGLDTLFAQNAAAALLCLLKAIGSREHIYILNMAQDYAAMKAQEKAKKEQEERKHKGALEKEKERLQNMDEEEYDALTEEEKLTFDRGIQQALRERKKREQERLAKEMQEKKLQQELERQKEEDELKRRVKKGKQGPIKEEPPMKKSQAANKQVPPLTKVDVKMETIERKISVREQTMSEKEELNKKKRNMGDVSMHGLPLVQDQEDSEGDNSKDPDKQLAPKFKTYELTLKDVQNILMYWDRKQGVQLPPAGMEEAPHEPDDQRQVPLGGRRGRKDRERERLEKERTEKERLEREKAERERLEKLRALEERSDWEGEGEEDHEGKKEKDLGVPFLDIQTPDFEGLSWKQALESDKLPKGEQILDILGLGASGPPIPPPALFSIVSYPVKRPPLTMTDDLEHFVFVIPPSEDISLDEKKEMEIESDFLATTNTTKAQEEQTSSSKGGKQKMKEKIDQVFEIQKDKRHMALNRKVLSGEPAGTISQLSDTDLDNFNGQHSQEKFTRLNHFRWIVPANGEVTLQVHFSSDEFGNFDQTFNFEILGTCCQYQLYCRGICTYPYICQDPKVVFPQRKMDMKTNEVIFKKYVMSTETYYFGPLLCGKSRDKYKSSLFPGNMETLTILNTSLMVVEASFYFQNDVKANTYFLEPNTMVLKPNEKQILNVWAYPTSVGVFEDSIVCCINDNPEPAIFQLSCQGIRPELELEPRQLHFDRLLLHRQESRVVLLRNVTLLPVAWRITSLEHLGDDFTVSLMQGTIPPEAEYGLHLYFQPTKPVNIKKAIRLEVLDAENLLGVVQIENIMVFAEAYDIALDITFPKGAEGGLDFGIVRVTEEAKQPLQLKNRGKYEIAFSFSVDSVGISTPNINSMISVQPKKGSLTPTEKPTNVQVFFHAKKEVKIEHQPVLRCQIIEPNISEGGEIIASIPIKFSANAVYSKYNITPSSVINFGALICGTRKSTTFTIENQGVTDFKFALYKLTGESPIHQKKAASHVRHARSRESESFYKTGSSRAAKFSDTIQKEVTTTGQARFAHGMFTVYPGFGSIPSGGQQVINVDCVADAMGKCEEFIAIDISGRDPAVHPAGILYTLLAEACLPAFVTENNALIFEEHQICTSANLHHILQTIESGGLFVEDENKFIFCNVLVGRQAKARFKISNVGKITCDVNIVVRPISNKPFARIVDIFEVEPSKMCIASHSHAFATVSFTPQIMQNYQCIFEATLDGLPSTLAKSRGLVFDIAGEGNLPRVTVVRPVLHNQYGNPLLLFKRLLLGHSEKLPLILKNNGVLPAQLHVDLQDELGVFSLKGRPTTAYIYITEENKPHVKAKKAHTASLVVSPGDTAEFDVVFHSQKVGRMRGIIHLSVINNQYEETSIHMVGEGYEDDITLDNIHGLVAPTSQEDISISEFTEIIEDNDMEDLVAAALVDHIQFGDCHIGHSYNASFTVTNHSQVNLIRFEWPVSATIAFSPQMGHLHPGCAKDIVVTMKSDVPINLKNMRIRCKLSRIMFQLPADQVPDWDDRMHTVKWVDVPRNMPGTFTTKRKVIETDPEPAHSVLEENYQELQLQISANVDFASYHCQARDVRFKETLVYQTRVFEFDVINSGRVQLEFSWVSEDTSKAVSFAKPDHQGSAQKDQLSQGTMHTGSTLDSTMDHWAEGSPQPFSVEPSSGIVPVGKIQKFKVKFSPLDIGDFESNLFCQIPNLPPGEQGPVLVAKGRSTLPICHFDLKDSDYISGHQRNPELRGSSGGALDPNTRVIEFTTVGIGGKNLRTFTILNPTNSTYSFCWISEEIESLQNPAAFTCLTEKGFIHPEKKAEIVFQFTPFHLGITESSWTFLIPEHNITVPFLLVGKTTEPLISLNKSHLNFSSLLIGREARETVQIINKEEQGFDFSFQDNSRYSEGFSNSLLVCPMEGWIPPLSRFPIDIFFTPKQEGDVNFNLICNVEKKVHPVTLNVKAEGYTMNVEIKCKDRTGSITLLTPNQTNIINFYEVELNECVQCEFNFINTGKFTFSFQAQLCGSKTLLQYLEFSPIDSTVDVGQSVHATLSFQPLKKCVLTDLELIIKISHGPTFMCNISGCAVSPAIHFSFTSYNFGTCFIYQAGMPPYKQTLVITNKEETPMSIDCLYTNTTHLEVNSRVDVVKPGNTLEIPITFYPRESINYQELIPFEINGLSQQTVEIKGKGTKMKILVLDPANRIVKLGAVLPGQVVKRTVSIMNNSLAQLTFNQSILFTIPELQEPKVLTLAPFHNITLKPKEVCKLEVIFAPKKRVPPFSEEVFMECMGLLRPLFLLSGCCQALEISLDQEHIPFGPVVYQTQATRRILMMNTGDVGARFKWDIKKFEPHFSISPEEGYITSGMEVSFEVTYHPTEVGKESLCKNILCYIQGGSPLSLTLSGVCVGPPAVKEVVNFTCQVRSKHTQTILLSNRTNQTWNLHPIFEGEHWEGPEFITLEAHQQNKPYEITYRPRTMNLENRKHQGTLFFPLPDGTGWLYALHGTSELPKAVANIYREVPCKTPYTELLPITNWLNKPQRFRVIVEILKPEKPDLSITMKGLDYIDVLSGSKKDYKLNFFSHKEGTYAAKVIFRNEVTNEFLYYNVSFRVIPSGIIKTIEMVTPVRQVASASIKLENPLPYSVTFSTECRMPDIALPSQFVVPANSEGTFSFEFQPLKAGETFGRLTLHNTDLGYYQYELYLKATPALPEKPVHFQTVLGSSQIILVKFINYTRQRTEYYCRTDCTDFHAEKLINAAPGGQGGTEASVEVLFEPSHLGETKGILILSSLAGGEYIIPLFGMALPPKPQGPFSIRAGYSIIIPFKNVFYHMVTFSIIVDNPAFTIRAGESVRPKKINNITVSFEGNPSGSKTPITTKLTVSCPPGEGSETGVKWVYYLKGITL</sequence>